<evidence type="ECO:0000255" key="1">
    <source>
        <dbReference type="HAMAP-Rule" id="MF_00049"/>
    </source>
</evidence>
<feature type="chain" id="PRO_1000009321" description="Leucine--tRNA ligase">
    <location>
        <begin position="1"/>
        <end position="820"/>
    </location>
</feature>
<feature type="short sequence motif" description="'HIGH' region">
    <location>
        <begin position="40"/>
        <end position="51"/>
    </location>
</feature>
<feature type="short sequence motif" description="'KMSKS' region">
    <location>
        <begin position="601"/>
        <end position="605"/>
    </location>
</feature>
<feature type="binding site" evidence="1">
    <location>
        <position position="604"/>
    </location>
    <ligand>
        <name>ATP</name>
        <dbReference type="ChEBI" id="CHEBI:30616"/>
    </ligand>
</feature>
<keyword id="KW-0030">Aminoacyl-tRNA synthetase</keyword>
<keyword id="KW-0067">ATP-binding</keyword>
<keyword id="KW-0963">Cytoplasm</keyword>
<keyword id="KW-0436">Ligase</keyword>
<keyword id="KW-0547">Nucleotide-binding</keyword>
<keyword id="KW-0648">Protein biosynthesis</keyword>
<accession>Q254X5</accession>
<sequence>MRYDPSLIEKKWQEFWKEHKSFKANEADDKPKYYVLDMFPYPSGAGLHVGHLIGYTATDIVARYKRAKGFSVLHPMGWDSFGLPAEQYAVRTGTHPRETTQKNIENFRKQLSAMGFSYDEGREFATSDPEYYRWTQKLFLLLYEKGLAYMADMAVNYCPELGTVLSNEEVENGLSIEGGYPVERRMLRQWILRITAYSDQLLEGLEGLDWPENVKQLQRNWIGKSEGALVRFKVNNQNFLEVFTTRPDTLCGVSFLVIAPEHPEVGQLIAEDRREEVEAYICRAQSKSERDRISESKIKSGVFTGTYAKHPITGADIPIWVSDYVILGYGSGVVMGVPAHDERDREFAETFSLPIYEVLDTDGYCIHSNHGDFLLDGLWGREAQDYVIAYLQKKNLGESKVAYKLRDWLFSRQRYWGEPIPIIHFEDGTCRPLEDDELPLLPPEIQDYRPEGFGQGPLAKVKEWVDIHDKKTNRQGRRETHTMPQWAGSCWYYLRFCDALNSQAPWSNEKEKYWMPVDLYIGGAEHAVLHLLYSRFWHRVFYDAGMVSTPEPFKKLINQGLVLATSYRIPGKGYVYPEDAHEDNGVWMSTSGEELEVRQEKMSKSKLNGVDPQILIEEFGADALRMYAMFSGPLDKNKLWCNQGVSGCRRFLNRFYELVTSSLVQDIDDPKGMYLAHRLVHRVGEDIEKMSLNTIPSSFMEFINEFVKLDIYPKSALAMVVRALAPIAPHISEELWTILGNAPGIDQAGWPEVDPKYLEDTSVTFVIQVNGKLRARLDISKNAAREEVLSLAREAVSRYLEDKEVKKEIFVPNRLVNFVL</sequence>
<name>SYL_CHLFF</name>
<dbReference type="EC" id="6.1.1.4" evidence="1"/>
<dbReference type="EMBL" id="AP006861">
    <property type="protein sequence ID" value="BAE81163.1"/>
    <property type="molecule type" value="Genomic_DNA"/>
</dbReference>
<dbReference type="RefSeq" id="WP_011457943.1">
    <property type="nucleotide sequence ID" value="NC_007899.1"/>
</dbReference>
<dbReference type="SMR" id="Q254X5"/>
<dbReference type="STRING" id="264202.CF0391"/>
<dbReference type="KEGG" id="cfe:CF0391"/>
<dbReference type="eggNOG" id="COG0495">
    <property type="taxonomic scope" value="Bacteria"/>
</dbReference>
<dbReference type="HOGENOM" id="CLU_004427_0_0_0"/>
<dbReference type="OrthoDB" id="9810365at2"/>
<dbReference type="Proteomes" id="UP000001260">
    <property type="component" value="Chromosome"/>
</dbReference>
<dbReference type="GO" id="GO:0005829">
    <property type="term" value="C:cytosol"/>
    <property type="evidence" value="ECO:0007669"/>
    <property type="project" value="TreeGrafter"/>
</dbReference>
<dbReference type="GO" id="GO:0002161">
    <property type="term" value="F:aminoacyl-tRNA deacylase activity"/>
    <property type="evidence" value="ECO:0007669"/>
    <property type="project" value="InterPro"/>
</dbReference>
<dbReference type="GO" id="GO:0005524">
    <property type="term" value="F:ATP binding"/>
    <property type="evidence" value="ECO:0007669"/>
    <property type="project" value="UniProtKB-UniRule"/>
</dbReference>
<dbReference type="GO" id="GO:0004823">
    <property type="term" value="F:leucine-tRNA ligase activity"/>
    <property type="evidence" value="ECO:0007669"/>
    <property type="project" value="UniProtKB-UniRule"/>
</dbReference>
<dbReference type="GO" id="GO:0006429">
    <property type="term" value="P:leucyl-tRNA aminoacylation"/>
    <property type="evidence" value="ECO:0007669"/>
    <property type="project" value="UniProtKB-UniRule"/>
</dbReference>
<dbReference type="CDD" id="cd07958">
    <property type="entry name" value="Anticodon_Ia_Leu_BEm"/>
    <property type="match status" value="1"/>
</dbReference>
<dbReference type="CDD" id="cd00812">
    <property type="entry name" value="LeuRS_core"/>
    <property type="match status" value="1"/>
</dbReference>
<dbReference type="FunFam" id="1.10.730.10:FF:000002">
    <property type="entry name" value="Leucine--tRNA ligase"/>
    <property type="match status" value="1"/>
</dbReference>
<dbReference type="FunFam" id="3.40.50.620:FF:000056">
    <property type="entry name" value="Leucine--tRNA ligase"/>
    <property type="match status" value="1"/>
</dbReference>
<dbReference type="FunFam" id="3.40.50.620:FF:000077">
    <property type="entry name" value="Leucine--tRNA ligase"/>
    <property type="match status" value="1"/>
</dbReference>
<dbReference type="Gene3D" id="3.40.50.620">
    <property type="entry name" value="HUPs"/>
    <property type="match status" value="2"/>
</dbReference>
<dbReference type="Gene3D" id="1.10.730.10">
    <property type="entry name" value="Isoleucyl-tRNA Synthetase, Domain 1"/>
    <property type="match status" value="1"/>
</dbReference>
<dbReference type="Gene3D" id="3.90.740.10">
    <property type="entry name" value="Valyl/Leucyl/Isoleucyl-tRNA synthetase, editing domain"/>
    <property type="match status" value="1"/>
</dbReference>
<dbReference type="HAMAP" id="MF_00049_B">
    <property type="entry name" value="Leu_tRNA_synth_B"/>
    <property type="match status" value="1"/>
</dbReference>
<dbReference type="InterPro" id="IPR001412">
    <property type="entry name" value="aa-tRNA-synth_I_CS"/>
</dbReference>
<dbReference type="InterPro" id="IPR002302">
    <property type="entry name" value="Leu-tRNA-ligase"/>
</dbReference>
<dbReference type="InterPro" id="IPR025709">
    <property type="entry name" value="Leu_tRNA-synth_edit"/>
</dbReference>
<dbReference type="InterPro" id="IPR013155">
    <property type="entry name" value="M/V/L/I-tRNA-synth_anticd-bd"/>
</dbReference>
<dbReference type="InterPro" id="IPR015413">
    <property type="entry name" value="Methionyl/Leucyl_tRNA_Synth"/>
</dbReference>
<dbReference type="InterPro" id="IPR014729">
    <property type="entry name" value="Rossmann-like_a/b/a_fold"/>
</dbReference>
<dbReference type="InterPro" id="IPR009080">
    <property type="entry name" value="tRNAsynth_Ia_anticodon-bd"/>
</dbReference>
<dbReference type="InterPro" id="IPR009008">
    <property type="entry name" value="Val/Leu/Ile-tRNA-synth_edit"/>
</dbReference>
<dbReference type="NCBIfam" id="TIGR00396">
    <property type="entry name" value="leuS_bact"/>
    <property type="match status" value="1"/>
</dbReference>
<dbReference type="PANTHER" id="PTHR43740:SF2">
    <property type="entry name" value="LEUCINE--TRNA LIGASE, MITOCHONDRIAL"/>
    <property type="match status" value="1"/>
</dbReference>
<dbReference type="PANTHER" id="PTHR43740">
    <property type="entry name" value="LEUCYL-TRNA SYNTHETASE"/>
    <property type="match status" value="1"/>
</dbReference>
<dbReference type="Pfam" id="PF08264">
    <property type="entry name" value="Anticodon_1"/>
    <property type="match status" value="1"/>
</dbReference>
<dbReference type="Pfam" id="PF13603">
    <property type="entry name" value="tRNA-synt_1_2"/>
    <property type="match status" value="1"/>
</dbReference>
<dbReference type="Pfam" id="PF09334">
    <property type="entry name" value="tRNA-synt_1g"/>
    <property type="match status" value="1"/>
</dbReference>
<dbReference type="PRINTS" id="PR00985">
    <property type="entry name" value="TRNASYNTHLEU"/>
</dbReference>
<dbReference type="SUPFAM" id="SSF47323">
    <property type="entry name" value="Anticodon-binding domain of a subclass of class I aminoacyl-tRNA synthetases"/>
    <property type="match status" value="1"/>
</dbReference>
<dbReference type="SUPFAM" id="SSF52374">
    <property type="entry name" value="Nucleotidylyl transferase"/>
    <property type="match status" value="1"/>
</dbReference>
<dbReference type="SUPFAM" id="SSF50677">
    <property type="entry name" value="ValRS/IleRS/LeuRS editing domain"/>
    <property type="match status" value="1"/>
</dbReference>
<dbReference type="PROSITE" id="PS00178">
    <property type="entry name" value="AA_TRNA_LIGASE_I"/>
    <property type="match status" value="1"/>
</dbReference>
<organism>
    <name type="scientific">Chlamydia felis (strain Fe/C-56)</name>
    <name type="common">Chlamydophila felis</name>
    <dbReference type="NCBI Taxonomy" id="264202"/>
    <lineage>
        <taxon>Bacteria</taxon>
        <taxon>Pseudomonadati</taxon>
        <taxon>Chlamydiota</taxon>
        <taxon>Chlamydiia</taxon>
        <taxon>Chlamydiales</taxon>
        <taxon>Chlamydiaceae</taxon>
        <taxon>Chlamydia/Chlamydophila group</taxon>
        <taxon>Chlamydia</taxon>
    </lineage>
</organism>
<reference key="1">
    <citation type="journal article" date="2006" name="DNA Res.">
        <title>Genome sequence of the cat pathogen, Chlamydophila felis.</title>
        <authorList>
            <person name="Azuma Y."/>
            <person name="Hirakawa H."/>
            <person name="Yamashita A."/>
            <person name="Cai Y."/>
            <person name="Rahman M.A."/>
            <person name="Suzuki H."/>
            <person name="Mitaku S."/>
            <person name="Toh H."/>
            <person name="Goto S."/>
            <person name="Murakami T."/>
            <person name="Sugi K."/>
            <person name="Hayashi H."/>
            <person name="Fukushi H."/>
            <person name="Hattori M."/>
            <person name="Kuhara S."/>
            <person name="Shirai M."/>
        </authorList>
    </citation>
    <scope>NUCLEOTIDE SEQUENCE [LARGE SCALE GENOMIC DNA]</scope>
    <source>
        <strain>Fe/C-56</strain>
    </source>
</reference>
<comment type="catalytic activity">
    <reaction evidence="1">
        <text>tRNA(Leu) + L-leucine + ATP = L-leucyl-tRNA(Leu) + AMP + diphosphate</text>
        <dbReference type="Rhea" id="RHEA:11688"/>
        <dbReference type="Rhea" id="RHEA-COMP:9613"/>
        <dbReference type="Rhea" id="RHEA-COMP:9622"/>
        <dbReference type="ChEBI" id="CHEBI:30616"/>
        <dbReference type="ChEBI" id="CHEBI:33019"/>
        <dbReference type="ChEBI" id="CHEBI:57427"/>
        <dbReference type="ChEBI" id="CHEBI:78442"/>
        <dbReference type="ChEBI" id="CHEBI:78494"/>
        <dbReference type="ChEBI" id="CHEBI:456215"/>
        <dbReference type="EC" id="6.1.1.4"/>
    </reaction>
</comment>
<comment type="subcellular location">
    <subcellularLocation>
        <location evidence="1">Cytoplasm</location>
    </subcellularLocation>
</comment>
<comment type="similarity">
    <text evidence="1">Belongs to the class-I aminoacyl-tRNA synthetase family.</text>
</comment>
<protein>
    <recommendedName>
        <fullName evidence="1">Leucine--tRNA ligase</fullName>
        <ecNumber evidence="1">6.1.1.4</ecNumber>
    </recommendedName>
    <alternativeName>
        <fullName evidence="1">Leucyl-tRNA synthetase</fullName>
        <shortName evidence="1">LeuRS</shortName>
    </alternativeName>
</protein>
<proteinExistence type="inferred from homology"/>
<gene>
    <name evidence="1" type="primary">leuS</name>
    <name type="ordered locus">CF0391</name>
</gene>